<dbReference type="EMBL" id="U00096">
    <property type="protein sequence ID" value="AAC74042.1"/>
    <property type="molecule type" value="Genomic_DNA"/>
</dbReference>
<dbReference type="EMBL" id="AP009048">
    <property type="protein sequence ID" value="BAA35714.1"/>
    <property type="molecule type" value="Genomic_DNA"/>
</dbReference>
<dbReference type="EMBL" id="V00307">
    <property type="status" value="NOT_ANNOTATED_CDS"/>
    <property type="molecule type" value="Genomic_DNA"/>
</dbReference>
<dbReference type="PIR" id="C64836">
    <property type="entry name" value="C64836"/>
</dbReference>
<dbReference type="RefSeq" id="NP_415476.1">
    <property type="nucleotide sequence ID" value="NC_000913.3"/>
</dbReference>
<dbReference type="RefSeq" id="WP_000877161.1">
    <property type="nucleotide sequence ID" value="NZ_STEB01000006.1"/>
</dbReference>
<dbReference type="PDB" id="4D8J">
    <property type="method" value="X-ray"/>
    <property type="resolution" value="3.55 A"/>
    <property type="chains" value="A/B/C/D/G/H/K/L=1-150"/>
</dbReference>
<dbReference type="PDBsum" id="4D8J"/>
<dbReference type="SMR" id="P0A8N0"/>
<dbReference type="BioGRID" id="4260031">
    <property type="interactions" value="18"/>
</dbReference>
<dbReference type="BioGRID" id="849944">
    <property type="interactions" value="12"/>
</dbReference>
<dbReference type="FunCoup" id="P0A8N0">
    <property type="interactions" value="96"/>
</dbReference>
<dbReference type="IntAct" id="P0A8N0">
    <property type="interactions" value="24"/>
</dbReference>
<dbReference type="STRING" id="511145.b0956"/>
<dbReference type="jPOST" id="P0A8N0"/>
<dbReference type="PaxDb" id="511145-b0956"/>
<dbReference type="EnsemblBacteria" id="AAC74042">
    <property type="protein sequence ID" value="AAC74042"/>
    <property type="gene ID" value="b0956"/>
</dbReference>
<dbReference type="GeneID" id="93776458"/>
<dbReference type="GeneID" id="945570"/>
<dbReference type="KEGG" id="ecj:JW0939"/>
<dbReference type="KEGG" id="eco:b0956"/>
<dbReference type="KEGG" id="ecoc:C3026_05845"/>
<dbReference type="PATRIC" id="fig|1411691.4.peg.1318"/>
<dbReference type="EchoBASE" id="EB2699"/>
<dbReference type="eggNOG" id="COG3120">
    <property type="taxonomic scope" value="Bacteria"/>
</dbReference>
<dbReference type="HOGENOM" id="CLU_142157_0_0_6"/>
<dbReference type="InParanoid" id="P0A8N0"/>
<dbReference type="OMA" id="KYANQMS"/>
<dbReference type="OrthoDB" id="5814691at2"/>
<dbReference type="PhylomeDB" id="P0A8N0"/>
<dbReference type="BioCyc" id="EcoCyc:EG12855-MONOMER"/>
<dbReference type="EvolutionaryTrace" id="P0A8N0"/>
<dbReference type="PRO" id="PR:P0A8N0"/>
<dbReference type="Proteomes" id="UP000000625">
    <property type="component" value="Chromosome"/>
</dbReference>
<dbReference type="CollecTF" id="EXPREG_000007b0"/>
<dbReference type="GO" id="GO:0005737">
    <property type="term" value="C:cytoplasm"/>
    <property type="evidence" value="ECO:0007669"/>
    <property type="project" value="UniProtKB-SubCell"/>
</dbReference>
<dbReference type="GO" id="GO:0097047">
    <property type="term" value="C:DNA replication termination region"/>
    <property type="evidence" value="ECO:0000314"/>
    <property type="project" value="EcoCyc"/>
</dbReference>
<dbReference type="GO" id="GO:0005543">
    <property type="term" value="F:phospholipid binding"/>
    <property type="evidence" value="ECO:0000314"/>
    <property type="project" value="EcoCyc"/>
</dbReference>
<dbReference type="GO" id="GO:0042803">
    <property type="term" value="F:protein homodimerization activity"/>
    <property type="evidence" value="ECO:0000314"/>
    <property type="project" value="EcoCyc"/>
</dbReference>
<dbReference type="GO" id="GO:0043565">
    <property type="term" value="F:sequence-specific DNA binding"/>
    <property type="evidence" value="ECO:0000314"/>
    <property type="project" value="EcoCyc"/>
</dbReference>
<dbReference type="GO" id="GO:0051301">
    <property type="term" value="P:cell division"/>
    <property type="evidence" value="ECO:0000315"/>
    <property type="project" value="EcoCyc"/>
</dbReference>
<dbReference type="GO" id="GO:0051276">
    <property type="term" value="P:chromosome organization"/>
    <property type="evidence" value="ECO:0000314"/>
    <property type="project" value="EcoCyc"/>
</dbReference>
<dbReference type="GO" id="GO:0007059">
    <property type="term" value="P:chromosome segregation"/>
    <property type="evidence" value="ECO:0000315"/>
    <property type="project" value="EcoCyc"/>
</dbReference>
<dbReference type="GO" id="GO:0051289">
    <property type="term" value="P:protein homotetramerization"/>
    <property type="evidence" value="ECO:0000314"/>
    <property type="project" value="EcoCyc"/>
</dbReference>
<dbReference type="GO" id="GO:0006355">
    <property type="term" value="P:regulation of DNA-templated transcription"/>
    <property type="evidence" value="ECO:0007669"/>
    <property type="project" value="InterPro"/>
</dbReference>
<dbReference type="FunFam" id="1.10.1220.10:FF:000004">
    <property type="entry name" value="Macrodomain Ter protein"/>
    <property type="match status" value="1"/>
</dbReference>
<dbReference type="FunFam" id="1.20.1270.380:FF:000001">
    <property type="entry name" value="Macrodomain Ter protein"/>
    <property type="match status" value="1"/>
</dbReference>
<dbReference type="Gene3D" id="1.20.1270.380">
    <property type="entry name" value="MatP, N-terminal domain"/>
    <property type="match status" value="1"/>
</dbReference>
<dbReference type="Gene3D" id="1.10.1220.10">
    <property type="entry name" value="Met repressor-like"/>
    <property type="match status" value="1"/>
</dbReference>
<dbReference type="HAMAP" id="MF_01073">
    <property type="entry name" value="MatP"/>
    <property type="match status" value="1"/>
</dbReference>
<dbReference type="InterPro" id="IPR013321">
    <property type="entry name" value="Arc_rbn_hlx_hlx"/>
</dbReference>
<dbReference type="InterPro" id="IPR009390">
    <property type="entry name" value="MatP"/>
</dbReference>
<dbReference type="InterPro" id="IPR035375">
    <property type="entry name" value="MatP_C"/>
</dbReference>
<dbReference type="InterPro" id="IPR035087">
    <property type="entry name" value="MatP_N"/>
</dbReference>
<dbReference type="InterPro" id="IPR038339">
    <property type="entry name" value="MatP_N_sf"/>
</dbReference>
<dbReference type="NCBIfam" id="NF003471">
    <property type="entry name" value="PRK05097.1"/>
    <property type="match status" value="1"/>
</dbReference>
<dbReference type="Pfam" id="PF06303">
    <property type="entry name" value="MatP"/>
    <property type="match status" value="1"/>
</dbReference>
<dbReference type="Pfam" id="PF17414">
    <property type="entry name" value="MatP_C"/>
    <property type="match status" value="1"/>
</dbReference>
<sequence length="150" mass="17693">MKYQQLENLESGWKWKYLVKKHREGELITRYIEASAAQEAVDVLLSLENEPVLVNGWIDKHMNPELVNRMKQTIRARRKRHFNAEHQHTRKKSIDLEFIVWQRLAGLAQRRGKTLSETIVQLIEDAENKEKYANKMSSLKQDLQALLGKE</sequence>
<proteinExistence type="evidence at protein level"/>
<gene>
    <name evidence="1" type="primary">matP</name>
    <name type="synonym">ycbG</name>
    <name type="ordered locus">b0956</name>
    <name type="ordered locus">JW0939</name>
</gene>
<reference key="1">
    <citation type="journal article" date="1996" name="DNA Res.">
        <title>A 718-kb DNA sequence of the Escherichia coli K-12 genome corresponding to the 12.7-28.0 min region on the linkage map.</title>
        <authorList>
            <person name="Oshima T."/>
            <person name="Aiba H."/>
            <person name="Baba T."/>
            <person name="Fujita K."/>
            <person name="Hayashi K."/>
            <person name="Honjo A."/>
            <person name="Ikemoto K."/>
            <person name="Inada T."/>
            <person name="Itoh T."/>
            <person name="Kajihara M."/>
            <person name="Kanai K."/>
            <person name="Kashimoto K."/>
            <person name="Kimura S."/>
            <person name="Kitagawa M."/>
            <person name="Makino K."/>
            <person name="Masuda S."/>
            <person name="Miki T."/>
            <person name="Mizobuchi K."/>
            <person name="Mori H."/>
            <person name="Motomura K."/>
            <person name="Nakamura Y."/>
            <person name="Nashimoto H."/>
            <person name="Nishio Y."/>
            <person name="Saito N."/>
            <person name="Sampei G."/>
            <person name="Seki Y."/>
            <person name="Tagami H."/>
            <person name="Takemoto K."/>
            <person name="Wada C."/>
            <person name="Yamamoto Y."/>
            <person name="Yano M."/>
            <person name="Horiuchi T."/>
        </authorList>
    </citation>
    <scope>NUCLEOTIDE SEQUENCE [LARGE SCALE GENOMIC DNA]</scope>
    <source>
        <strain>K12 / W3110 / ATCC 27325 / DSM 5911</strain>
    </source>
</reference>
<reference key="2">
    <citation type="journal article" date="1997" name="Science">
        <title>The complete genome sequence of Escherichia coli K-12.</title>
        <authorList>
            <person name="Blattner F.R."/>
            <person name="Plunkett G. III"/>
            <person name="Bloch C.A."/>
            <person name="Perna N.T."/>
            <person name="Burland V."/>
            <person name="Riley M."/>
            <person name="Collado-Vides J."/>
            <person name="Glasner J.D."/>
            <person name="Rode C.K."/>
            <person name="Mayhew G.F."/>
            <person name="Gregor J."/>
            <person name="Davis N.W."/>
            <person name="Kirkpatrick H.A."/>
            <person name="Goeden M.A."/>
            <person name="Rose D.J."/>
            <person name="Mau B."/>
            <person name="Shao Y."/>
        </authorList>
    </citation>
    <scope>NUCLEOTIDE SEQUENCE [LARGE SCALE GENOMIC DNA]</scope>
    <source>
        <strain>K12 / MG1655 / ATCC 47076</strain>
    </source>
</reference>
<reference key="3">
    <citation type="journal article" date="2006" name="Mol. Syst. Biol.">
        <title>Highly accurate genome sequences of Escherichia coli K-12 strains MG1655 and W3110.</title>
        <authorList>
            <person name="Hayashi K."/>
            <person name="Morooka N."/>
            <person name="Yamamoto Y."/>
            <person name="Fujita K."/>
            <person name="Isono K."/>
            <person name="Choi S."/>
            <person name="Ohtsubo E."/>
            <person name="Baba T."/>
            <person name="Wanner B.L."/>
            <person name="Mori H."/>
            <person name="Horiuchi T."/>
        </authorList>
    </citation>
    <scope>NUCLEOTIDE SEQUENCE [LARGE SCALE GENOMIC DNA]</scope>
    <source>
        <strain>K12 / W3110 / ATCC 27325 / DSM 5911</strain>
    </source>
</reference>
<reference key="4">
    <citation type="journal article" date="1980" name="Nucleic Acids Res.">
        <title>Nucleotide sequence of the gene ompA coding the outer membrane protein II of Escherichia coli K-12.</title>
        <authorList>
            <person name="Beck E."/>
            <person name="Bremer E."/>
        </authorList>
    </citation>
    <scope>NUCLEOTIDE SEQUENCE [GENOMIC DNA] OF 112-150</scope>
    <source>
        <strain>K12</strain>
    </source>
</reference>
<reference key="5">
    <citation type="journal article" date="1995" name="Nucleic Acids Res.">
        <title>Detection of new genes in a bacterial genome using Markov models for three gene classes.</title>
        <authorList>
            <person name="Borodovsky M."/>
            <person name="McIninch J."/>
            <person name="Koonin E.V."/>
            <person name="Rudd K.E."/>
            <person name="Medigue C."/>
            <person name="Danchin A."/>
        </authorList>
    </citation>
    <scope>IDENTIFICATION</scope>
</reference>
<reference key="6">
    <citation type="journal article" date="2008" name="Cell">
        <title>The MatP/matS site-specific system organizes the terminus region of the E. coli chromosome into a macrodomain.</title>
        <authorList>
            <person name="Mercier R."/>
            <person name="Petit M.A."/>
            <person name="Schbath S."/>
            <person name="Robin S."/>
            <person name="El Karoui M."/>
            <person name="Boccard F."/>
            <person name="Espeli O."/>
        </authorList>
    </citation>
    <scope>FUNCTION</scope>
    <scope>DNA-BINDING</scope>
    <scope>SUBUNIT</scope>
    <scope>SUBCELLULAR LOCATION</scope>
    <scope>DISRUPTION PHENOTYPE</scope>
    <scope>GENE NAME</scope>
    <source>
        <strain>K12 / MG1655 / ATCC 47076</strain>
    </source>
</reference>
<name>MATP_ECOLI</name>
<organism>
    <name type="scientific">Escherichia coli (strain K12)</name>
    <dbReference type="NCBI Taxonomy" id="83333"/>
    <lineage>
        <taxon>Bacteria</taxon>
        <taxon>Pseudomonadati</taxon>
        <taxon>Pseudomonadota</taxon>
        <taxon>Gammaproteobacteria</taxon>
        <taxon>Enterobacterales</taxon>
        <taxon>Enterobacteriaceae</taxon>
        <taxon>Escherichia</taxon>
    </lineage>
</organism>
<evidence type="ECO:0000255" key="1">
    <source>
        <dbReference type="HAMAP-Rule" id="MF_01073"/>
    </source>
</evidence>
<evidence type="ECO:0000269" key="2">
    <source>
    </source>
</evidence>
<protein>
    <recommendedName>
        <fullName evidence="1">Macrodomain Ter protein</fullName>
    </recommendedName>
</protein>
<accession>P0A8N0</accession>
<accession>P45569</accession>
<accession>P75868</accession>
<accession>Q83RX3</accession>
<feature type="chain" id="PRO_0000070347" description="Macrodomain Ter protein">
    <location>
        <begin position="1"/>
        <end position="150"/>
    </location>
</feature>
<comment type="function">
    <text evidence="1 2">Required for spatial organization of the terminus region of the chromosome (Ter macrodomain) during the cell cycle. Prevents early segregation of duplicated Ter macrodomains during cell division. Binds specifically to matS, which is a 13 bp signature motif repeated within the Ter macrodomain.</text>
</comment>
<comment type="subunit">
    <text evidence="1 2">Homodimer.</text>
</comment>
<comment type="subcellular location">
    <subcellularLocation>
        <location evidence="1 2">Cytoplasm</location>
    </subcellularLocation>
    <text>Accumulates in the cell as a discrete focus that colocalizes with the Ter macrodomain.</text>
</comment>
<comment type="disruption phenotype">
    <text evidence="2">Mutants grown in rich medium show severe defects in chromosome segregation and cell division.</text>
</comment>
<comment type="similarity">
    <text evidence="1">Belongs to the MatP family.</text>
</comment>
<keyword id="KW-0002">3D-structure</keyword>
<keyword id="KW-0131">Cell cycle</keyword>
<keyword id="KW-0132">Cell division</keyword>
<keyword id="KW-0963">Cytoplasm</keyword>
<keyword id="KW-0238">DNA-binding</keyword>
<keyword id="KW-1185">Reference proteome</keyword>